<protein>
    <recommendedName>
        <fullName>D-alanine aminotransferase</fullName>
        <ecNumber>2.6.1.21</ecNumber>
    </recommendedName>
    <alternativeName>
        <fullName>D-amino acid aminotransferase</fullName>
    </alternativeName>
    <alternativeName>
        <fullName>D-amino acid transaminase</fullName>
        <shortName>DAAT</shortName>
    </alternativeName>
    <alternativeName>
        <fullName>D-aspartate aminotransferase</fullName>
    </alternativeName>
</protein>
<gene>
    <name type="primary">dat</name>
</gene>
<proteinExistence type="inferred from homology"/>
<keyword id="KW-0032">Aminotransferase</keyword>
<keyword id="KW-0663">Pyridoxal phosphate</keyword>
<keyword id="KW-0808">Transferase</keyword>
<reference key="1">
    <citation type="journal article" date="1995" name="J. Bacteriol.">
        <title>Staphylococcus haemolyticus contains two D-glutamic acid biosynthetic activities, a glutamate racemase and a D-amino acid transaminase.</title>
        <authorList>
            <person name="Pucci M.J."/>
            <person name="Thanassi J.A."/>
            <person name="Ho H.-T."/>
            <person name="Falk P.J."/>
            <person name="Dougherty T.J."/>
        </authorList>
    </citation>
    <scope>NUCLEOTIDE SEQUENCE [GENOMIC DNA]</scope>
    <source>
        <strain>Y176</strain>
    </source>
</reference>
<evidence type="ECO:0000250" key="1"/>
<evidence type="ECO:0000250" key="2">
    <source>
        <dbReference type="UniProtKB" id="P19938"/>
    </source>
</evidence>
<evidence type="ECO:0000305" key="3"/>
<dbReference type="EC" id="2.6.1.21"/>
<dbReference type="EMBL" id="U12238">
    <property type="protein sequence ID" value="AAA20396.1"/>
    <property type="molecule type" value="Genomic_DNA"/>
</dbReference>
<dbReference type="RefSeq" id="WP_011275473.1">
    <property type="nucleotide sequence ID" value="NZ_VEID01000011.1"/>
</dbReference>
<dbReference type="SMR" id="P54694"/>
<dbReference type="STRING" id="1283.ShL2_01058"/>
<dbReference type="GeneID" id="93780583"/>
<dbReference type="OMA" id="MSRIAYV"/>
<dbReference type="GO" id="GO:0005829">
    <property type="term" value="C:cytosol"/>
    <property type="evidence" value="ECO:0007669"/>
    <property type="project" value="TreeGrafter"/>
</dbReference>
<dbReference type="GO" id="GO:0047810">
    <property type="term" value="F:D-alanine-2-oxoglutarate aminotransferase activity"/>
    <property type="evidence" value="ECO:0000250"/>
    <property type="project" value="UniProtKB"/>
</dbReference>
<dbReference type="GO" id="GO:0030170">
    <property type="term" value="F:pyridoxal phosphate binding"/>
    <property type="evidence" value="ECO:0000250"/>
    <property type="project" value="UniProtKB"/>
</dbReference>
<dbReference type="GO" id="GO:0046437">
    <property type="term" value="P:D-amino acid biosynthetic process"/>
    <property type="evidence" value="ECO:0000250"/>
    <property type="project" value="UniProtKB"/>
</dbReference>
<dbReference type="GO" id="GO:0019478">
    <property type="term" value="P:D-amino acid catabolic process"/>
    <property type="evidence" value="ECO:0000250"/>
    <property type="project" value="UniProtKB"/>
</dbReference>
<dbReference type="CDD" id="cd01558">
    <property type="entry name" value="D-AAT_like"/>
    <property type="match status" value="1"/>
</dbReference>
<dbReference type="FunFam" id="3.20.10.10:FF:000002">
    <property type="entry name" value="D-alanine aminotransferase"/>
    <property type="match status" value="1"/>
</dbReference>
<dbReference type="FunFam" id="3.30.470.10:FF:000009">
    <property type="entry name" value="D-alanine aminotransferase"/>
    <property type="match status" value="1"/>
</dbReference>
<dbReference type="Gene3D" id="3.30.470.10">
    <property type="match status" value="1"/>
</dbReference>
<dbReference type="Gene3D" id="3.20.10.10">
    <property type="entry name" value="D-amino Acid Aminotransferase, subunit A, domain 2"/>
    <property type="match status" value="1"/>
</dbReference>
<dbReference type="InterPro" id="IPR001544">
    <property type="entry name" value="Aminotrans_IV"/>
</dbReference>
<dbReference type="InterPro" id="IPR018300">
    <property type="entry name" value="Aminotrans_IV_CS"/>
</dbReference>
<dbReference type="InterPro" id="IPR036038">
    <property type="entry name" value="Aminotransferase-like"/>
</dbReference>
<dbReference type="InterPro" id="IPR043132">
    <property type="entry name" value="BCAT-like_C"/>
</dbReference>
<dbReference type="InterPro" id="IPR043131">
    <property type="entry name" value="BCAT-like_N"/>
</dbReference>
<dbReference type="InterPro" id="IPR050571">
    <property type="entry name" value="Class-IV_PLP-Dep_Aminotrnsfr"/>
</dbReference>
<dbReference type="InterPro" id="IPR005784">
    <property type="entry name" value="D_amino_transT"/>
</dbReference>
<dbReference type="NCBIfam" id="TIGR01121">
    <property type="entry name" value="D_amino_aminoT"/>
    <property type="match status" value="1"/>
</dbReference>
<dbReference type="PANTHER" id="PTHR42743">
    <property type="entry name" value="AMINO-ACID AMINOTRANSFERASE"/>
    <property type="match status" value="1"/>
</dbReference>
<dbReference type="PANTHER" id="PTHR42743:SF10">
    <property type="entry name" value="D-ALANINE AMINOTRANSFERASE"/>
    <property type="match status" value="1"/>
</dbReference>
<dbReference type="Pfam" id="PF01063">
    <property type="entry name" value="Aminotran_4"/>
    <property type="match status" value="1"/>
</dbReference>
<dbReference type="SUPFAM" id="SSF56752">
    <property type="entry name" value="D-aminoacid aminotransferase-like PLP-dependent enzymes"/>
    <property type="match status" value="1"/>
</dbReference>
<dbReference type="PROSITE" id="PS00770">
    <property type="entry name" value="AA_TRANSFER_CLASS_4"/>
    <property type="match status" value="1"/>
</dbReference>
<accession>P54694</accession>
<sequence>MTKVFINGEFIDQNEAKVSYEDRGYVFGDGIYEYIRAYDGKLFTVTEHFERFIRSASEIQLDLGYTVEELIDVVRELLKVNNIQNGGIYIQATRGVAPRNHSFPTPEVKPVIMAFAKSYDRPYDDLENGINAATVEDIRWLRCDIKSLNLLGNVLAKEYAVKYNAGEAIQHRGETVTEGASSNVYAIKDGAIYTHPVNNYILNGITRKVIKWISEDEDIPFKEETFTVEFLKNADEVIVSSTSAEVTPVVKIDGEQVGDGKVGPVTRQLQEGFNKYIESRSS</sequence>
<feature type="chain" id="PRO_0000103261" description="D-alanine aminotransferase">
    <location>
        <begin position="1"/>
        <end position="282"/>
    </location>
</feature>
<feature type="active site" description="Proton acceptor" evidence="2">
    <location>
        <position position="146"/>
    </location>
</feature>
<feature type="binding site" evidence="2">
    <location>
        <position position="32"/>
    </location>
    <ligand>
        <name>substrate</name>
    </ligand>
</feature>
<feature type="binding site" evidence="2">
    <location>
        <position position="51"/>
    </location>
    <ligand>
        <name>pyridoxal 5'-phosphate</name>
        <dbReference type="ChEBI" id="CHEBI:597326"/>
    </ligand>
</feature>
<feature type="binding site" evidence="2">
    <location>
        <position position="99"/>
    </location>
    <ligand>
        <name>substrate</name>
    </ligand>
</feature>
<feature type="binding site" evidence="2">
    <location>
        <position position="101"/>
    </location>
    <ligand>
        <name>substrate</name>
    </ligand>
</feature>
<feature type="binding site" evidence="2">
    <location>
        <position position="178"/>
    </location>
    <ligand>
        <name>pyridoxal 5'-phosphate</name>
        <dbReference type="ChEBI" id="CHEBI:597326"/>
    </ligand>
</feature>
<feature type="modified residue" description="N6-(pyridoxal phosphate)lysine" evidence="2">
    <location>
        <position position="146"/>
    </location>
</feature>
<organism>
    <name type="scientific">Staphylococcus haemolyticus</name>
    <dbReference type="NCBI Taxonomy" id="1283"/>
    <lineage>
        <taxon>Bacteria</taxon>
        <taxon>Bacillati</taxon>
        <taxon>Bacillota</taxon>
        <taxon>Bacilli</taxon>
        <taxon>Bacillales</taxon>
        <taxon>Staphylococcaceae</taxon>
        <taxon>Staphylococcus</taxon>
    </lineage>
</organism>
<name>DAAA_STAHA</name>
<comment type="function">
    <text evidence="1">Acts on the D-isomers of alanine, leucine, aspartate, glutamate, aminobutyrate, norvaline and asparagine. The enzyme transfers an amino group from a substrate D-amino acid to the pyridoxal phosphate cofactor to form pyridoxamine and an alpha-keto acid in the first half-reaction. The second half-reaction is the reverse of the first, transferring the amino group from the pyridoxamine to a second alpha-keto acid to form the product D-amino acid via a ping-pong mechanism. This is an important process in the formation of D-alanine and D-glutamate, which are essential bacterial cell wall components (By similarity).</text>
</comment>
<comment type="catalytic activity">
    <reaction>
        <text>D-alanine + 2-oxoglutarate = D-glutamate + pyruvate</text>
        <dbReference type="Rhea" id="RHEA:15869"/>
        <dbReference type="ChEBI" id="CHEBI:15361"/>
        <dbReference type="ChEBI" id="CHEBI:16810"/>
        <dbReference type="ChEBI" id="CHEBI:29986"/>
        <dbReference type="ChEBI" id="CHEBI:57416"/>
        <dbReference type="EC" id="2.6.1.21"/>
    </reaction>
</comment>
<comment type="cofactor">
    <cofactor evidence="1">
        <name>pyridoxal 5'-phosphate</name>
        <dbReference type="ChEBI" id="CHEBI:597326"/>
    </cofactor>
</comment>
<comment type="subunit">
    <text evidence="1">Homodimer.</text>
</comment>
<comment type="similarity">
    <text evidence="3">Belongs to the class-IV pyridoxal-phosphate-dependent aminotransferase family.</text>
</comment>